<protein>
    <recommendedName>
        <fullName evidence="1">Probable alpha-L-glutamate ligase 1</fullName>
        <ecNumber evidence="1">6.3.2.-</ecNumber>
    </recommendedName>
</protein>
<organism>
    <name type="scientific">Shewanella baltica (strain OS195)</name>
    <dbReference type="NCBI Taxonomy" id="399599"/>
    <lineage>
        <taxon>Bacteria</taxon>
        <taxon>Pseudomonadati</taxon>
        <taxon>Pseudomonadota</taxon>
        <taxon>Gammaproteobacteria</taxon>
        <taxon>Alteromonadales</taxon>
        <taxon>Shewanellaceae</taxon>
        <taxon>Shewanella</taxon>
    </lineage>
</organism>
<gene>
    <name evidence="1" type="primary">rimK1</name>
    <name type="ordered locus">Sbal195_2496</name>
</gene>
<reference key="1">
    <citation type="submission" date="2007-11" db="EMBL/GenBank/DDBJ databases">
        <title>Complete sequence of chromosome of Shewanella baltica OS195.</title>
        <authorList>
            <consortium name="US DOE Joint Genome Institute"/>
            <person name="Copeland A."/>
            <person name="Lucas S."/>
            <person name="Lapidus A."/>
            <person name="Barry K."/>
            <person name="Glavina del Rio T."/>
            <person name="Dalin E."/>
            <person name="Tice H."/>
            <person name="Pitluck S."/>
            <person name="Chain P."/>
            <person name="Malfatti S."/>
            <person name="Shin M."/>
            <person name="Vergez L."/>
            <person name="Schmutz J."/>
            <person name="Larimer F."/>
            <person name="Land M."/>
            <person name="Hauser L."/>
            <person name="Kyrpides N."/>
            <person name="Kim E."/>
            <person name="Brettar I."/>
            <person name="Rodrigues J."/>
            <person name="Konstantinidis K."/>
            <person name="Klappenbach J."/>
            <person name="Hofle M."/>
            <person name="Tiedje J."/>
            <person name="Richardson P."/>
        </authorList>
    </citation>
    <scope>NUCLEOTIDE SEQUENCE [LARGE SCALE GENOMIC DNA]</scope>
    <source>
        <strain>OS195</strain>
    </source>
</reference>
<accession>A9L3Q4</accession>
<sequence length="301" mass="32423">MRIAILSQGPELYSTKRLVEAAQLRGHEVHVINPLECYMNINMRQSSIHIGGRELPAFDAVIPRIGASITFYGSAVLRQFEMMGVYALNDSVGISRSRDKLRSMQLMSRRGIGLPITGFANKPSDIPDLIDMVGGAPLVIKLLEGTQGIGVVLAETRKAAESVIEAFMGLKANIMVQEYIKEANGADIRCFVLGDKVIAAMKRQAMPGEFRSNLHRGGTASLVKLTPEERSVAIRAAKTMGLNVAGVDLLRSNHGPVIMEVNSSPGLEGIEGATTKDVAGAIIDFVEKNAIKVKKVTQAQG</sequence>
<comment type="cofactor">
    <cofactor evidence="1">
        <name>Mg(2+)</name>
        <dbReference type="ChEBI" id="CHEBI:18420"/>
    </cofactor>
    <cofactor evidence="1">
        <name>Mn(2+)</name>
        <dbReference type="ChEBI" id="CHEBI:29035"/>
    </cofactor>
    <text evidence="1">Binds 2 magnesium or manganese ions per subunit.</text>
</comment>
<comment type="similarity">
    <text evidence="1">Belongs to the RimK family.</text>
</comment>
<dbReference type="EC" id="6.3.2.-" evidence="1"/>
<dbReference type="EMBL" id="CP000891">
    <property type="protein sequence ID" value="ABX49664.1"/>
    <property type="molecule type" value="Genomic_DNA"/>
</dbReference>
<dbReference type="SMR" id="A9L3Q4"/>
<dbReference type="KEGG" id="sbn:Sbal195_2496"/>
<dbReference type="HOGENOM" id="CLU_054353_0_1_6"/>
<dbReference type="Proteomes" id="UP000000770">
    <property type="component" value="Chromosome"/>
</dbReference>
<dbReference type="GO" id="GO:0005737">
    <property type="term" value="C:cytoplasm"/>
    <property type="evidence" value="ECO:0007669"/>
    <property type="project" value="TreeGrafter"/>
</dbReference>
<dbReference type="GO" id="GO:0005524">
    <property type="term" value="F:ATP binding"/>
    <property type="evidence" value="ECO:0007669"/>
    <property type="project" value="UniProtKB-UniRule"/>
</dbReference>
<dbReference type="GO" id="GO:0046872">
    <property type="term" value="F:metal ion binding"/>
    <property type="evidence" value="ECO:0007669"/>
    <property type="project" value="UniProtKB-KW"/>
</dbReference>
<dbReference type="GO" id="GO:0018169">
    <property type="term" value="F:ribosomal S6-glutamic acid ligase activity"/>
    <property type="evidence" value="ECO:0007669"/>
    <property type="project" value="TreeGrafter"/>
</dbReference>
<dbReference type="GO" id="GO:0036211">
    <property type="term" value="P:protein modification process"/>
    <property type="evidence" value="ECO:0007669"/>
    <property type="project" value="InterPro"/>
</dbReference>
<dbReference type="GO" id="GO:0009432">
    <property type="term" value="P:SOS response"/>
    <property type="evidence" value="ECO:0007669"/>
    <property type="project" value="TreeGrafter"/>
</dbReference>
<dbReference type="GO" id="GO:0006412">
    <property type="term" value="P:translation"/>
    <property type="evidence" value="ECO:0007669"/>
    <property type="project" value="UniProtKB-KW"/>
</dbReference>
<dbReference type="FunFam" id="3.40.50.20:FF:000004">
    <property type="entry name" value="Probable alpha-L-glutamate ligase"/>
    <property type="match status" value="1"/>
</dbReference>
<dbReference type="FunFam" id="3.30.1490.20:FF:000005">
    <property type="entry name" value="Probable alpha-L-glutamate ligase 1"/>
    <property type="match status" value="1"/>
</dbReference>
<dbReference type="FunFam" id="3.30.470.20:FF:000016">
    <property type="entry name" value="Ribosomal protein S6--L-glutamate ligase"/>
    <property type="match status" value="1"/>
</dbReference>
<dbReference type="Gene3D" id="3.40.50.20">
    <property type="match status" value="1"/>
</dbReference>
<dbReference type="Gene3D" id="3.30.1490.20">
    <property type="entry name" value="ATP-grasp fold, A domain"/>
    <property type="match status" value="1"/>
</dbReference>
<dbReference type="Gene3D" id="3.30.470.20">
    <property type="entry name" value="ATP-grasp fold, B domain"/>
    <property type="match status" value="1"/>
</dbReference>
<dbReference type="HAMAP" id="MF_01552">
    <property type="entry name" value="RimK"/>
    <property type="match status" value="1"/>
</dbReference>
<dbReference type="InterPro" id="IPR011761">
    <property type="entry name" value="ATP-grasp"/>
</dbReference>
<dbReference type="InterPro" id="IPR013651">
    <property type="entry name" value="ATP-grasp_RimK-type"/>
</dbReference>
<dbReference type="InterPro" id="IPR013815">
    <property type="entry name" value="ATP_grasp_subdomain_1"/>
</dbReference>
<dbReference type="InterPro" id="IPR023533">
    <property type="entry name" value="RimK"/>
</dbReference>
<dbReference type="InterPro" id="IPR041107">
    <property type="entry name" value="Rimk_N"/>
</dbReference>
<dbReference type="InterPro" id="IPR004666">
    <property type="entry name" value="Rp_bS6_RimK/Lys_biosynth_LsyX"/>
</dbReference>
<dbReference type="NCBIfam" id="NF007764">
    <property type="entry name" value="PRK10446.1"/>
    <property type="match status" value="1"/>
</dbReference>
<dbReference type="NCBIfam" id="TIGR00768">
    <property type="entry name" value="rimK_fam"/>
    <property type="match status" value="1"/>
</dbReference>
<dbReference type="PANTHER" id="PTHR21621:SF7">
    <property type="entry name" value="RIBOSOMAL PROTEIN BS6--L-GLUTAMATE LIGASE"/>
    <property type="match status" value="1"/>
</dbReference>
<dbReference type="PANTHER" id="PTHR21621">
    <property type="entry name" value="RIBOSOMAL PROTEIN S6 MODIFICATION PROTEIN"/>
    <property type="match status" value="1"/>
</dbReference>
<dbReference type="Pfam" id="PF08443">
    <property type="entry name" value="RimK"/>
    <property type="match status" value="1"/>
</dbReference>
<dbReference type="Pfam" id="PF18030">
    <property type="entry name" value="Rimk_N"/>
    <property type="match status" value="1"/>
</dbReference>
<dbReference type="SUPFAM" id="SSF56059">
    <property type="entry name" value="Glutathione synthetase ATP-binding domain-like"/>
    <property type="match status" value="1"/>
</dbReference>
<dbReference type="PROSITE" id="PS50975">
    <property type="entry name" value="ATP_GRASP"/>
    <property type="match status" value="1"/>
</dbReference>
<name>RIMK1_SHEB9</name>
<proteinExistence type="inferred from homology"/>
<feature type="chain" id="PRO_0000340552" description="Probable alpha-L-glutamate ligase 1">
    <location>
        <begin position="1"/>
        <end position="301"/>
    </location>
</feature>
<feature type="domain" description="ATP-grasp" evidence="1">
    <location>
        <begin position="104"/>
        <end position="287"/>
    </location>
</feature>
<feature type="binding site" evidence="1">
    <location>
        <position position="141"/>
    </location>
    <ligand>
        <name>ATP</name>
        <dbReference type="ChEBI" id="CHEBI:30616"/>
    </ligand>
</feature>
<feature type="binding site" evidence="1">
    <location>
        <begin position="178"/>
        <end position="179"/>
    </location>
    <ligand>
        <name>ATP</name>
        <dbReference type="ChEBI" id="CHEBI:30616"/>
    </ligand>
</feature>
<feature type="binding site" evidence="1">
    <location>
        <position position="187"/>
    </location>
    <ligand>
        <name>ATP</name>
        <dbReference type="ChEBI" id="CHEBI:30616"/>
    </ligand>
</feature>
<feature type="binding site" evidence="1">
    <location>
        <begin position="211"/>
        <end position="213"/>
    </location>
    <ligand>
        <name>ATP</name>
        <dbReference type="ChEBI" id="CHEBI:30616"/>
    </ligand>
</feature>
<feature type="binding site" evidence="1">
    <location>
        <position position="248"/>
    </location>
    <ligand>
        <name>Mg(2+)</name>
        <dbReference type="ChEBI" id="CHEBI:18420"/>
        <label>1</label>
    </ligand>
</feature>
<feature type="binding site" evidence="1">
    <location>
        <position position="248"/>
    </location>
    <ligand>
        <name>Mn(2+)</name>
        <dbReference type="ChEBI" id="CHEBI:29035"/>
        <label>1</label>
    </ligand>
</feature>
<feature type="binding site" evidence="1">
    <location>
        <position position="260"/>
    </location>
    <ligand>
        <name>Mg(2+)</name>
        <dbReference type="ChEBI" id="CHEBI:18420"/>
        <label>1</label>
    </ligand>
</feature>
<feature type="binding site" evidence="1">
    <location>
        <position position="260"/>
    </location>
    <ligand>
        <name>Mg(2+)</name>
        <dbReference type="ChEBI" id="CHEBI:18420"/>
        <label>2</label>
    </ligand>
</feature>
<feature type="binding site" evidence="1">
    <location>
        <position position="260"/>
    </location>
    <ligand>
        <name>Mn(2+)</name>
        <dbReference type="ChEBI" id="CHEBI:29035"/>
        <label>1</label>
    </ligand>
</feature>
<feature type="binding site" evidence="1">
    <location>
        <position position="260"/>
    </location>
    <ligand>
        <name>Mn(2+)</name>
        <dbReference type="ChEBI" id="CHEBI:29035"/>
        <label>2</label>
    </ligand>
</feature>
<feature type="binding site" evidence="1">
    <location>
        <position position="262"/>
    </location>
    <ligand>
        <name>Mg(2+)</name>
        <dbReference type="ChEBI" id="CHEBI:18420"/>
        <label>2</label>
    </ligand>
</feature>
<feature type="binding site" evidence="1">
    <location>
        <position position="262"/>
    </location>
    <ligand>
        <name>Mn(2+)</name>
        <dbReference type="ChEBI" id="CHEBI:29035"/>
        <label>2</label>
    </ligand>
</feature>
<evidence type="ECO:0000255" key="1">
    <source>
        <dbReference type="HAMAP-Rule" id="MF_01552"/>
    </source>
</evidence>
<keyword id="KW-0067">ATP-binding</keyword>
<keyword id="KW-0436">Ligase</keyword>
<keyword id="KW-0460">Magnesium</keyword>
<keyword id="KW-0464">Manganese</keyword>
<keyword id="KW-0479">Metal-binding</keyword>
<keyword id="KW-0547">Nucleotide-binding</keyword>
<keyword id="KW-0648">Protein biosynthesis</keyword>